<protein>
    <recommendedName>
        <fullName>Macrophage metalloelastase</fullName>
        <shortName>MME</shortName>
        <ecNumber>3.4.24.65</ecNumber>
    </recommendedName>
    <alternativeName>
        <fullName>Matrix metalloproteinase-12</fullName>
        <shortName>MMP-12</shortName>
    </alternativeName>
</protein>
<gene>
    <name type="primary">MMP12</name>
</gene>
<dbReference type="EC" id="3.4.24.65"/>
<dbReference type="EMBL" id="U88652">
    <property type="protein sequence ID" value="AAB46993.1"/>
    <property type="molecule type" value="mRNA"/>
</dbReference>
<dbReference type="RefSeq" id="NP_001076240.1">
    <property type="nucleotide sequence ID" value="NM_001082771.1"/>
</dbReference>
<dbReference type="SMR" id="P79227"/>
<dbReference type="FunCoup" id="P79227">
    <property type="interactions" value="17"/>
</dbReference>
<dbReference type="STRING" id="9986.ENSOCUP00000007180"/>
<dbReference type="BindingDB" id="P79227"/>
<dbReference type="ChEMBL" id="CHEMBL1932899"/>
<dbReference type="MEROPS" id="M10.009"/>
<dbReference type="GlyCosmos" id="P79227">
    <property type="glycosylation" value="1 site, No reported glycans"/>
</dbReference>
<dbReference type="PaxDb" id="9986-ENSOCUP00000007180"/>
<dbReference type="GeneID" id="100009559"/>
<dbReference type="KEGG" id="ocu:100009559"/>
<dbReference type="CTD" id="4321"/>
<dbReference type="eggNOG" id="KOG1565">
    <property type="taxonomic scope" value="Eukaryota"/>
</dbReference>
<dbReference type="InParanoid" id="P79227"/>
<dbReference type="OrthoDB" id="406838at2759"/>
<dbReference type="PRO" id="PR:P79227"/>
<dbReference type="Proteomes" id="UP000001811">
    <property type="component" value="Unplaced"/>
</dbReference>
<dbReference type="GO" id="GO:0031012">
    <property type="term" value="C:extracellular matrix"/>
    <property type="evidence" value="ECO:0007669"/>
    <property type="project" value="InterPro"/>
</dbReference>
<dbReference type="GO" id="GO:0005576">
    <property type="term" value="C:extracellular region"/>
    <property type="evidence" value="ECO:0007669"/>
    <property type="project" value="UniProtKB-KW"/>
</dbReference>
<dbReference type="GO" id="GO:0004222">
    <property type="term" value="F:metalloendopeptidase activity"/>
    <property type="evidence" value="ECO:0007669"/>
    <property type="project" value="UniProtKB-EC"/>
</dbReference>
<dbReference type="GO" id="GO:0008270">
    <property type="term" value="F:zinc ion binding"/>
    <property type="evidence" value="ECO:0007669"/>
    <property type="project" value="InterPro"/>
</dbReference>
<dbReference type="GO" id="GO:0030574">
    <property type="term" value="P:collagen catabolic process"/>
    <property type="evidence" value="ECO:0007669"/>
    <property type="project" value="TreeGrafter"/>
</dbReference>
<dbReference type="GO" id="GO:0030198">
    <property type="term" value="P:extracellular matrix organization"/>
    <property type="evidence" value="ECO:0007669"/>
    <property type="project" value="TreeGrafter"/>
</dbReference>
<dbReference type="GO" id="GO:0006508">
    <property type="term" value="P:proteolysis"/>
    <property type="evidence" value="ECO:0007669"/>
    <property type="project" value="UniProtKB-KW"/>
</dbReference>
<dbReference type="CDD" id="cd00094">
    <property type="entry name" value="HX"/>
    <property type="match status" value="1"/>
</dbReference>
<dbReference type="CDD" id="cd04278">
    <property type="entry name" value="ZnMc_MMP"/>
    <property type="match status" value="1"/>
</dbReference>
<dbReference type="FunFam" id="3.40.390.10:FF:000007">
    <property type="entry name" value="Collagenase 3"/>
    <property type="match status" value="1"/>
</dbReference>
<dbReference type="FunFam" id="2.110.10.10:FF:000002">
    <property type="entry name" value="Matrix metallopeptidase 3"/>
    <property type="match status" value="1"/>
</dbReference>
<dbReference type="Gene3D" id="3.40.390.10">
    <property type="entry name" value="Collagenase (Catalytic Domain)"/>
    <property type="match status" value="1"/>
</dbReference>
<dbReference type="Gene3D" id="2.110.10.10">
    <property type="entry name" value="Hemopexin-like domain"/>
    <property type="match status" value="1"/>
</dbReference>
<dbReference type="InterPro" id="IPR000585">
    <property type="entry name" value="Hemopexin-like_dom"/>
</dbReference>
<dbReference type="InterPro" id="IPR036375">
    <property type="entry name" value="Hemopexin-like_dom_sf"/>
</dbReference>
<dbReference type="InterPro" id="IPR018487">
    <property type="entry name" value="Hemopexin-like_repeat"/>
</dbReference>
<dbReference type="InterPro" id="IPR018486">
    <property type="entry name" value="Hemopexin_CS"/>
</dbReference>
<dbReference type="InterPro" id="IPR033739">
    <property type="entry name" value="M10A_MMP"/>
</dbReference>
<dbReference type="InterPro" id="IPR024079">
    <property type="entry name" value="MetalloPept_cat_dom_sf"/>
</dbReference>
<dbReference type="InterPro" id="IPR001818">
    <property type="entry name" value="Pept_M10_metallopeptidase"/>
</dbReference>
<dbReference type="InterPro" id="IPR021190">
    <property type="entry name" value="Pept_M10A"/>
</dbReference>
<dbReference type="InterPro" id="IPR021158">
    <property type="entry name" value="Pept_M10A_Zn_BS"/>
</dbReference>
<dbReference type="InterPro" id="IPR006026">
    <property type="entry name" value="Peptidase_Metallo"/>
</dbReference>
<dbReference type="InterPro" id="IPR002477">
    <property type="entry name" value="Peptidoglycan-bd-like"/>
</dbReference>
<dbReference type="InterPro" id="IPR036365">
    <property type="entry name" value="PGBD-like_sf"/>
</dbReference>
<dbReference type="PANTHER" id="PTHR10201:SF267">
    <property type="entry name" value="MACROPHAGE METALLOELASTASE"/>
    <property type="match status" value="1"/>
</dbReference>
<dbReference type="PANTHER" id="PTHR10201">
    <property type="entry name" value="MATRIX METALLOPROTEINASE"/>
    <property type="match status" value="1"/>
</dbReference>
<dbReference type="Pfam" id="PF00045">
    <property type="entry name" value="Hemopexin"/>
    <property type="match status" value="4"/>
</dbReference>
<dbReference type="Pfam" id="PF00413">
    <property type="entry name" value="Peptidase_M10"/>
    <property type="match status" value="1"/>
</dbReference>
<dbReference type="Pfam" id="PF01471">
    <property type="entry name" value="PG_binding_1"/>
    <property type="match status" value="1"/>
</dbReference>
<dbReference type="PIRSF" id="PIRSF001191">
    <property type="entry name" value="Peptidase_M10A_matrix"/>
    <property type="match status" value="1"/>
</dbReference>
<dbReference type="PRINTS" id="PR00138">
    <property type="entry name" value="MATRIXIN"/>
</dbReference>
<dbReference type="SMART" id="SM00120">
    <property type="entry name" value="HX"/>
    <property type="match status" value="4"/>
</dbReference>
<dbReference type="SMART" id="SM00235">
    <property type="entry name" value="ZnMc"/>
    <property type="match status" value="1"/>
</dbReference>
<dbReference type="SUPFAM" id="SSF50923">
    <property type="entry name" value="Hemopexin-like domain"/>
    <property type="match status" value="1"/>
</dbReference>
<dbReference type="SUPFAM" id="SSF55486">
    <property type="entry name" value="Metalloproteases ('zincins'), catalytic domain"/>
    <property type="match status" value="1"/>
</dbReference>
<dbReference type="SUPFAM" id="SSF47090">
    <property type="entry name" value="PGBD-like"/>
    <property type="match status" value="1"/>
</dbReference>
<dbReference type="PROSITE" id="PS00546">
    <property type="entry name" value="CYSTEINE_SWITCH"/>
    <property type="match status" value="1"/>
</dbReference>
<dbReference type="PROSITE" id="PS00024">
    <property type="entry name" value="HEMOPEXIN"/>
    <property type="match status" value="1"/>
</dbReference>
<dbReference type="PROSITE" id="PS51642">
    <property type="entry name" value="HEMOPEXIN_2"/>
    <property type="match status" value="4"/>
</dbReference>
<dbReference type="PROSITE" id="PS00142">
    <property type="entry name" value="ZINC_PROTEASE"/>
    <property type="match status" value="1"/>
</dbReference>
<reference key="1">
    <citation type="submission" date="1997-02" db="EMBL/GenBank/DDBJ databases">
        <authorList>
            <person name="Hou P."/>
        </authorList>
    </citation>
    <scope>NUCLEOTIDE SEQUENCE [MRNA]</scope>
    <source>
        <strain>New Zealand</strain>
    </source>
</reference>
<evidence type="ECO:0000250" key="1"/>
<evidence type="ECO:0000255" key="2"/>
<evidence type="ECO:0000255" key="3">
    <source>
        <dbReference type="PROSITE-ProRule" id="PRU10095"/>
    </source>
</evidence>
<evidence type="ECO:0000305" key="4"/>
<name>MMP12_RABIT</name>
<sequence>MKFLLLILTLWVTSSGADPLKENDMLFAENYLENFYGLKVERIPMTKMKTNRNFIEEKVQEMQQFLGLNVTGQLDTSTLEMMHKPRCGVPDVYHFKTMPGRPVWRKHYITYRIKNYTPDMKREDVEYAIQKAFQVWSDVTPLKFRKITTGKADIMILFASGAHGDYGAFDGRGGVIAHAFGPGPGIGGDTHFDEDEIWSKSYKGTNLFLVAVHELGHALGLDHSNDPKAIMFPTYGYIDLNTFHLSADDIRGIQSLYGGPEQHQPMPKPDNPEPTACDHNLKFDAVTTVGNKIFFFKDSFFWWKIPKSSTTSVRLISSLWPTLPSGIEAAYEIGDRHQVFLFKGDKFWLISHLRLQPNYPKSIHSLGFPDFVKKIDAAVFNPSLRKTYFFVDNLYWRYDERREVMDAGYPKLITKHFPGIGPKIDAVFYFQRYYYFFQGPNQLEYDTFSSRVTKKLKSNSWFDC</sequence>
<organism>
    <name type="scientific">Oryctolagus cuniculus</name>
    <name type="common">Rabbit</name>
    <dbReference type="NCBI Taxonomy" id="9986"/>
    <lineage>
        <taxon>Eukaryota</taxon>
        <taxon>Metazoa</taxon>
        <taxon>Chordata</taxon>
        <taxon>Craniata</taxon>
        <taxon>Vertebrata</taxon>
        <taxon>Euteleostomi</taxon>
        <taxon>Mammalia</taxon>
        <taxon>Eutheria</taxon>
        <taxon>Euarchontoglires</taxon>
        <taxon>Glires</taxon>
        <taxon>Lagomorpha</taxon>
        <taxon>Leporidae</taxon>
        <taxon>Oryctolagus</taxon>
    </lineage>
</organism>
<accession>P79227</accession>
<comment type="function">
    <text evidence="1">May be involved in tissue injury and remodeling. Has significant elastolytic activity. Can accept large and small amino acids at the P1' site, but has a preference for leucine. Aromatic or hydrophobic residues are preferred at the P1 site, with small hydrophobic residues (preferably alanine) occupying P3 (By similarity).</text>
</comment>
<comment type="catalytic activity">
    <reaction>
        <text>Hydrolysis of soluble and insoluble elastin. Specific cleavages are also produced at 14-Ala-|-Leu-15 and 16-Tyr-|-Leu-17 in the B chain of insulin.</text>
        <dbReference type="EC" id="3.4.24.65"/>
    </reaction>
</comment>
<comment type="cofactor">
    <cofactor evidence="1">
        <name>Ca(2+)</name>
        <dbReference type="ChEBI" id="CHEBI:29108"/>
    </cofactor>
    <text evidence="1">Binds 4 Ca(2+) ions per subunit.</text>
</comment>
<comment type="cofactor">
    <cofactor evidence="1">
        <name>Zn(2+)</name>
        <dbReference type="ChEBI" id="CHEBI:29105"/>
    </cofactor>
    <text evidence="1">Binds 2 Zn(2+) ions per subunit.</text>
</comment>
<comment type="subcellular location">
    <subcellularLocation>
        <location evidence="1">Secreted</location>
        <location evidence="1">Extracellular space</location>
        <location evidence="1">Extracellular matrix</location>
    </subcellularLocation>
</comment>
<comment type="domain">
    <text>The conserved cysteine present in the cysteine-switch motif binds the catalytic zinc ion, thus inhibiting the enzyme. The dissociation of the cysteine from the zinc ion upon the activation-peptide release activates the enzyme.</text>
</comment>
<comment type="similarity">
    <text evidence="4">Belongs to the peptidase M10A family.</text>
</comment>
<feature type="signal peptide" evidence="4">
    <location>
        <begin position="1"/>
        <end position="17"/>
    </location>
</feature>
<feature type="propeptide" id="PRO_0000028780" description="Activation peptide" evidence="1">
    <location>
        <begin position="18"/>
        <end position="100"/>
    </location>
</feature>
<feature type="chain" id="PRO_0000028781" description="Macrophage metalloelastase">
    <location>
        <begin position="101"/>
        <end position="464"/>
    </location>
</feature>
<feature type="repeat" description="Hemopexin 1">
    <location>
        <begin position="274"/>
        <end position="323"/>
    </location>
</feature>
<feature type="repeat" description="Hemopexin 2">
    <location>
        <begin position="324"/>
        <end position="370"/>
    </location>
</feature>
<feature type="repeat" description="Hemopexin 3">
    <location>
        <begin position="372"/>
        <end position="420"/>
    </location>
</feature>
<feature type="repeat" description="Hemopexin 4">
    <location>
        <begin position="421"/>
        <end position="464"/>
    </location>
</feature>
<feature type="short sequence motif" description="Cysteine switch" evidence="1">
    <location>
        <begin position="85"/>
        <end position="92"/>
    </location>
</feature>
<feature type="active site" evidence="3">
    <location>
        <position position="214"/>
    </location>
</feature>
<feature type="binding site" description="in inhibited form" evidence="1">
    <location>
        <position position="87"/>
    </location>
    <ligand>
        <name>Zn(2+)</name>
        <dbReference type="ChEBI" id="CHEBI:29105"/>
        <label>2</label>
        <note>catalytic</note>
    </ligand>
</feature>
<feature type="binding site" evidence="1">
    <location>
        <position position="119"/>
    </location>
    <ligand>
        <name>Ca(2+)</name>
        <dbReference type="ChEBI" id="CHEBI:29108"/>
        <label>1</label>
    </ligand>
</feature>
<feature type="binding site" evidence="1">
    <location>
        <position position="153"/>
    </location>
    <ligand>
        <name>Ca(2+)</name>
        <dbReference type="ChEBI" id="CHEBI:29108"/>
        <label>2</label>
    </ligand>
</feature>
<feature type="binding site" evidence="1">
    <location>
        <position position="163"/>
    </location>
    <ligand>
        <name>Zn(2+)</name>
        <dbReference type="ChEBI" id="CHEBI:29105"/>
        <label>1</label>
    </ligand>
</feature>
<feature type="binding site" evidence="1">
    <location>
        <position position="165"/>
    </location>
    <ligand>
        <name>Zn(2+)</name>
        <dbReference type="ChEBI" id="CHEBI:29105"/>
        <label>1</label>
    </ligand>
</feature>
<feature type="binding site" evidence="1">
    <location>
        <position position="170"/>
    </location>
    <ligand>
        <name>Ca(2+)</name>
        <dbReference type="ChEBI" id="CHEBI:29108"/>
        <label>3</label>
    </ligand>
</feature>
<feature type="binding site" evidence="1">
    <location>
        <position position="171"/>
    </location>
    <ligand>
        <name>Ca(2+)</name>
        <dbReference type="ChEBI" id="CHEBI:29108"/>
        <label>3</label>
    </ligand>
</feature>
<feature type="binding site" evidence="1">
    <location>
        <position position="173"/>
    </location>
    <ligand>
        <name>Ca(2+)</name>
        <dbReference type="ChEBI" id="CHEBI:29108"/>
        <label>3</label>
    </ligand>
</feature>
<feature type="binding site" evidence="1">
    <location>
        <position position="175"/>
    </location>
    <ligand>
        <name>Ca(2+)</name>
        <dbReference type="ChEBI" id="CHEBI:29108"/>
        <label>3</label>
    </ligand>
</feature>
<feature type="binding site" evidence="1">
    <location>
        <position position="178"/>
    </location>
    <ligand>
        <name>Zn(2+)</name>
        <dbReference type="ChEBI" id="CHEBI:29105"/>
        <label>1</label>
    </ligand>
</feature>
<feature type="binding site" evidence="1">
    <location>
        <position position="185"/>
    </location>
    <ligand>
        <name>Ca(2+)</name>
        <dbReference type="ChEBI" id="CHEBI:29108"/>
        <label>2</label>
    </ligand>
</feature>
<feature type="binding site" evidence="1">
    <location>
        <position position="187"/>
    </location>
    <ligand>
        <name>Ca(2+)</name>
        <dbReference type="ChEBI" id="CHEBI:29108"/>
        <label>2</label>
    </ligand>
</feature>
<feature type="binding site" evidence="1">
    <location>
        <position position="189"/>
    </location>
    <ligand>
        <name>Ca(2+)</name>
        <dbReference type="ChEBI" id="CHEBI:29108"/>
        <label>2</label>
    </ligand>
</feature>
<feature type="binding site" evidence="1">
    <location>
        <position position="191"/>
    </location>
    <ligand>
        <name>Zn(2+)</name>
        <dbReference type="ChEBI" id="CHEBI:29105"/>
        <label>1</label>
    </ligand>
</feature>
<feature type="binding site" evidence="1">
    <location>
        <position position="193"/>
    </location>
    <ligand>
        <name>Ca(2+)</name>
        <dbReference type="ChEBI" id="CHEBI:29108"/>
        <label>3</label>
    </ligand>
</feature>
<feature type="binding site" evidence="1">
    <location>
        <position position="194"/>
    </location>
    <ligand>
        <name>Ca(2+)</name>
        <dbReference type="ChEBI" id="CHEBI:29108"/>
        <label>1</label>
    </ligand>
</feature>
<feature type="binding site" evidence="1">
    <location>
        <position position="196"/>
    </location>
    <ligand>
        <name>Ca(2+)</name>
        <dbReference type="ChEBI" id="CHEBI:29108"/>
        <label>1</label>
    </ligand>
</feature>
<feature type="binding site" evidence="1">
    <location>
        <position position="196"/>
    </location>
    <ligand>
        <name>Ca(2+)</name>
        <dbReference type="ChEBI" id="CHEBI:29108"/>
        <label>3</label>
    </ligand>
</feature>
<feature type="binding site" evidence="1">
    <location>
        <position position="213"/>
    </location>
    <ligand>
        <name>Zn(2+)</name>
        <dbReference type="ChEBI" id="CHEBI:29105"/>
        <label>2</label>
        <note>catalytic</note>
    </ligand>
</feature>
<feature type="binding site" evidence="1">
    <location>
        <position position="217"/>
    </location>
    <ligand>
        <name>Zn(2+)</name>
        <dbReference type="ChEBI" id="CHEBI:29105"/>
        <label>2</label>
        <note>catalytic</note>
    </ligand>
</feature>
<feature type="binding site" evidence="1">
    <location>
        <position position="223"/>
    </location>
    <ligand>
        <name>Zn(2+)</name>
        <dbReference type="ChEBI" id="CHEBI:29105"/>
        <label>2</label>
        <note>catalytic</note>
    </ligand>
</feature>
<feature type="binding site" evidence="1">
    <location>
        <position position="284"/>
    </location>
    <ligand>
        <name>Ca(2+)</name>
        <dbReference type="ChEBI" id="CHEBI:29108"/>
        <label>4</label>
    </ligand>
</feature>
<feature type="binding site" evidence="1">
    <location>
        <position position="328"/>
    </location>
    <ligand>
        <name>Ca(2+)</name>
        <dbReference type="ChEBI" id="CHEBI:29108"/>
        <label>4</label>
    </ligand>
</feature>
<feature type="binding site" evidence="1">
    <location>
        <position position="376"/>
    </location>
    <ligand>
        <name>Ca(2+)</name>
        <dbReference type="ChEBI" id="CHEBI:29108"/>
        <label>4</label>
    </ligand>
</feature>
<feature type="binding site" evidence="1">
    <location>
        <position position="425"/>
    </location>
    <ligand>
        <name>Ca(2+)</name>
        <dbReference type="ChEBI" id="CHEBI:29108"/>
        <label>4</label>
    </ligand>
</feature>
<feature type="glycosylation site" description="N-linked (GlcNAc...) asparagine" evidence="2">
    <location>
        <position position="69"/>
    </location>
</feature>
<feature type="disulfide bond" evidence="1">
    <location>
        <begin position="277"/>
        <end position="464"/>
    </location>
</feature>
<keyword id="KW-0106">Calcium</keyword>
<keyword id="KW-1015">Disulfide bond</keyword>
<keyword id="KW-0272">Extracellular matrix</keyword>
<keyword id="KW-0325">Glycoprotein</keyword>
<keyword id="KW-0378">Hydrolase</keyword>
<keyword id="KW-0479">Metal-binding</keyword>
<keyword id="KW-0482">Metalloprotease</keyword>
<keyword id="KW-0645">Protease</keyword>
<keyword id="KW-1185">Reference proteome</keyword>
<keyword id="KW-0677">Repeat</keyword>
<keyword id="KW-0964">Secreted</keyword>
<keyword id="KW-0732">Signal</keyword>
<keyword id="KW-0862">Zinc</keyword>
<keyword id="KW-0865">Zymogen</keyword>
<proteinExistence type="evidence at transcript level"/>